<keyword id="KW-0378">Hydrolase</keyword>
<keyword id="KW-0479">Metal-binding</keyword>
<keyword id="KW-0862">Zinc</keyword>
<comment type="function">
    <text evidence="1">This enzyme scavenges exogenous and endogenous cytidine and 2'-deoxycytidine for UMP synthesis.</text>
</comment>
<comment type="catalytic activity">
    <reaction evidence="1">
        <text>cytidine + H2O + H(+) = uridine + NH4(+)</text>
        <dbReference type="Rhea" id="RHEA:16069"/>
        <dbReference type="ChEBI" id="CHEBI:15377"/>
        <dbReference type="ChEBI" id="CHEBI:15378"/>
        <dbReference type="ChEBI" id="CHEBI:16704"/>
        <dbReference type="ChEBI" id="CHEBI:17562"/>
        <dbReference type="ChEBI" id="CHEBI:28938"/>
        <dbReference type="EC" id="3.5.4.5"/>
    </reaction>
</comment>
<comment type="catalytic activity">
    <reaction evidence="1">
        <text>2'-deoxycytidine + H2O + H(+) = 2'-deoxyuridine + NH4(+)</text>
        <dbReference type="Rhea" id="RHEA:13433"/>
        <dbReference type="ChEBI" id="CHEBI:15377"/>
        <dbReference type="ChEBI" id="CHEBI:15378"/>
        <dbReference type="ChEBI" id="CHEBI:15698"/>
        <dbReference type="ChEBI" id="CHEBI:16450"/>
        <dbReference type="ChEBI" id="CHEBI:28938"/>
        <dbReference type="EC" id="3.5.4.5"/>
    </reaction>
</comment>
<comment type="cofactor">
    <cofactor evidence="1">
        <name>Zn(2+)</name>
        <dbReference type="ChEBI" id="CHEBI:29105"/>
    </cofactor>
    <text evidence="1">Binds 1 zinc ion.</text>
</comment>
<comment type="subunit">
    <text evidence="1">Homodimer.</text>
</comment>
<comment type="similarity">
    <text evidence="1">Belongs to the cytidine and deoxycytidylate deaminase family.</text>
</comment>
<proteinExistence type="inferred from homology"/>
<name>CDD_ACTP7</name>
<reference key="1">
    <citation type="submission" date="2008-06" db="EMBL/GenBank/DDBJ databases">
        <title>Genome and proteome analysis of A. pleuropneumoniae serotype 7.</title>
        <authorList>
            <person name="Linke B."/>
            <person name="Buettner F."/>
            <person name="Martinez-Arias R."/>
            <person name="Goesmann A."/>
            <person name="Baltes N."/>
            <person name="Tegetmeyer H."/>
            <person name="Singh M."/>
            <person name="Gerlach G.F."/>
        </authorList>
    </citation>
    <scope>NUCLEOTIDE SEQUENCE [LARGE SCALE GENOMIC DNA]</scope>
    <source>
        <strain>AP76</strain>
    </source>
</reference>
<evidence type="ECO:0000255" key="1">
    <source>
        <dbReference type="HAMAP-Rule" id="MF_01558"/>
    </source>
</evidence>
<evidence type="ECO:0000255" key="2">
    <source>
        <dbReference type="PROSITE-ProRule" id="PRU01083"/>
    </source>
</evidence>
<accession>B3GYC3</accession>
<feature type="chain" id="PRO_1000147093" description="Cytidine deaminase">
    <location>
        <begin position="1"/>
        <end position="297"/>
    </location>
</feature>
<feature type="domain" description="CMP/dCMP-type deaminase 1" evidence="2">
    <location>
        <begin position="54"/>
        <end position="174"/>
    </location>
</feature>
<feature type="domain" description="CMP/dCMP-type deaminase 2" evidence="2">
    <location>
        <begin position="192"/>
        <end position="297"/>
    </location>
</feature>
<feature type="active site" description="Proton donor" evidence="1">
    <location>
        <position position="110"/>
    </location>
</feature>
<feature type="binding site" evidence="1">
    <location>
        <begin position="95"/>
        <end position="97"/>
    </location>
    <ligand>
        <name>substrate</name>
    </ligand>
</feature>
<feature type="binding site" evidence="1">
    <location>
        <position position="108"/>
    </location>
    <ligand>
        <name>Zn(2+)</name>
        <dbReference type="ChEBI" id="CHEBI:29105"/>
        <note>catalytic</note>
    </ligand>
</feature>
<feature type="binding site" evidence="1">
    <location>
        <position position="135"/>
    </location>
    <ligand>
        <name>Zn(2+)</name>
        <dbReference type="ChEBI" id="CHEBI:29105"/>
        <note>catalytic</note>
    </ligand>
</feature>
<feature type="binding site" evidence="1">
    <location>
        <position position="138"/>
    </location>
    <ligand>
        <name>Zn(2+)</name>
        <dbReference type="ChEBI" id="CHEBI:29105"/>
        <note>catalytic</note>
    </ligand>
</feature>
<organism>
    <name type="scientific">Actinobacillus pleuropneumoniae serotype 7 (strain AP76)</name>
    <dbReference type="NCBI Taxonomy" id="537457"/>
    <lineage>
        <taxon>Bacteria</taxon>
        <taxon>Pseudomonadati</taxon>
        <taxon>Pseudomonadota</taxon>
        <taxon>Gammaproteobacteria</taxon>
        <taxon>Pasteurellales</taxon>
        <taxon>Pasteurellaceae</taxon>
        <taxon>Actinobacillus</taxon>
    </lineage>
</organism>
<gene>
    <name evidence="1" type="primary">cdd</name>
    <name type="ordered locus">APP7_1395</name>
</gene>
<sequence>MPTLFALKERIAQVVQEKNDPIVTAVATTLAEQQYNACFSAEQVKLWKRQFKCSSVELALACLPIAACYALVPISNFYVGAVAIGESGRFYFGANQEFNAQAIQQTVHAEQSAISHAWLAGETAITDMVVNYTPCGHCRQFMNELNSAKTLKIHLPHSQNNLLRQYLPDSFGPKDLNIEKVLFDQQTHSLPLRGDLLTQAAIQTAAQSYAPYSKSLSGIALQVGEQIICGRYAENAAFNPSFLPLQSALNYRRLSGKSDERISRIVMAESKGTTSHRQMSEALAESFLGLNLEYIEV</sequence>
<protein>
    <recommendedName>
        <fullName evidence="1">Cytidine deaminase</fullName>
        <ecNumber evidence="1">3.5.4.5</ecNumber>
    </recommendedName>
    <alternativeName>
        <fullName evidence="1">Cytidine aminohydrolase</fullName>
        <shortName evidence="1">CDA</shortName>
    </alternativeName>
</protein>
<dbReference type="EC" id="3.5.4.5" evidence="1"/>
<dbReference type="EMBL" id="CP001091">
    <property type="protein sequence ID" value="ACE62047.1"/>
    <property type="molecule type" value="Genomic_DNA"/>
</dbReference>
<dbReference type="RefSeq" id="WP_005598450.1">
    <property type="nucleotide sequence ID" value="NC_010939.1"/>
</dbReference>
<dbReference type="SMR" id="B3GYC3"/>
<dbReference type="GeneID" id="48599594"/>
<dbReference type="KEGG" id="apa:APP7_1395"/>
<dbReference type="HOGENOM" id="CLU_052424_0_0_6"/>
<dbReference type="Proteomes" id="UP000001226">
    <property type="component" value="Chromosome"/>
</dbReference>
<dbReference type="GO" id="GO:0005829">
    <property type="term" value="C:cytosol"/>
    <property type="evidence" value="ECO:0007669"/>
    <property type="project" value="TreeGrafter"/>
</dbReference>
<dbReference type="GO" id="GO:0004126">
    <property type="term" value="F:cytidine deaminase activity"/>
    <property type="evidence" value="ECO:0007669"/>
    <property type="project" value="UniProtKB-UniRule"/>
</dbReference>
<dbReference type="GO" id="GO:0042802">
    <property type="term" value="F:identical protein binding"/>
    <property type="evidence" value="ECO:0007669"/>
    <property type="project" value="UniProtKB-ARBA"/>
</dbReference>
<dbReference type="GO" id="GO:0008270">
    <property type="term" value="F:zinc ion binding"/>
    <property type="evidence" value="ECO:0007669"/>
    <property type="project" value="UniProtKB-UniRule"/>
</dbReference>
<dbReference type="GO" id="GO:0009972">
    <property type="term" value="P:cytidine deamination"/>
    <property type="evidence" value="ECO:0007669"/>
    <property type="project" value="InterPro"/>
</dbReference>
<dbReference type="CDD" id="cd01283">
    <property type="entry name" value="cytidine_deaminase"/>
    <property type="match status" value="1"/>
</dbReference>
<dbReference type="FunFam" id="3.40.140.10:FF:000007">
    <property type="entry name" value="Cytidine deaminase"/>
    <property type="match status" value="1"/>
</dbReference>
<dbReference type="Gene3D" id="3.40.140.10">
    <property type="entry name" value="Cytidine Deaminase, domain 2"/>
    <property type="match status" value="2"/>
</dbReference>
<dbReference type="HAMAP" id="MF_01558">
    <property type="entry name" value="Cyt_deam"/>
    <property type="match status" value="1"/>
</dbReference>
<dbReference type="InterPro" id="IPR016192">
    <property type="entry name" value="APOBEC/CMP_deaminase_Zn-bd"/>
</dbReference>
<dbReference type="InterPro" id="IPR002125">
    <property type="entry name" value="CMP_dCMP_dom"/>
</dbReference>
<dbReference type="InterPro" id="IPR013171">
    <property type="entry name" value="Cyd/dCyd_deaminase_Zn-bd"/>
</dbReference>
<dbReference type="InterPro" id="IPR050202">
    <property type="entry name" value="Cyt/Deoxycyt_deaminase"/>
</dbReference>
<dbReference type="InterPro" id="IPR016193">
    <property type="entry name" value="Cytidine_deaminase-like"/>
</dbReference>
<dbReference type="InterPro" id="IPR020797">
    <property type="entry name" value="Cytidine_deaminase_bacteria"/>
</dbReference>
<dbReference type="NCBIfam" id="NF006537">
    <property type="entry name" value="PRK09027.1"/>
    <property type="match status" value="1"/>
</dbReference>
<dbReference type="PANTHER" id="PTHR11644">
    <property type="entry name" value="CYTIDINE DEAMINASE"/>
    <property type="match status" value="1"/>
</dbReference>
<dbReference type="PANTHER" id="PTHR11644:SF2">
    <property type="entry name" value="CYTIDINE DEAMINASE"/>
    <property type="match status" value="1"/>
</dbReference>
<dbReference type="Pfam" id="PF00383">
    <property type="entry name" value="dCMP_cyt_deam_1"/>
    <property type="match status" value="1"/>
</dbReference>
<dbReference type="Pfam" id="PF08211">
    <property type="entry name" value="dCMP_cyt_deam_2"/>
    <property type="match status" value="1"/>
</dbReference>
<dbReference type="PIRSF" id="PIRSF006334">
    <property type="entry name" value="Cdd_plus_pseudo"/>
    <property type="match status" value="1"/>
</dbReference>
<dbReference type="SUPFAM" id="SSF53927">
    <property type="entry name" value="Cytidine deaminase-like"/>
    <property type="match status" value="2"/>
</dbReference>
<dbReference type="PROSITE" id="PS00903">
    <property type="entry name" value="CYT_DCMP_DEAMINASES_1"/>
    <property type="match status" value="1"/>
</dbReference>
<dbReference type="PROSITE" id="PS51747">
    <property type="entry name" value="CYT_DCMP_DEAMINASES_2"/>
    <property type="match status" value="2"/>
</dbReference>